<name>RNC_RHIME</name>
<gene>
    <name evidence="1" type="primary">rnc</name>
    <name type="ordered locus">R01072</name>
    <name type="ORF">SMc02652</name>
</gene>
<evidence type="ECO:0000255" key="1">
    <source>
        <dbReference type="HAMAP-Rule" id="MF_00104"/>
    </source>
</evidence>
<comment type="function">
    <text evidence="1">Digests double-stranded RNA. Involved in the processing of primary rRNA transcript to yield the immediate precursors to the large and small rRNAs (23S and 16S). Processes some mRNAs, and tRNAs when they are encoded in the rRNA operon. Processes pre-crRNA and tracrRNA of type II CRISPR loci if present in the organism.</text>
</comment>
<comment type="catalytic activity">
    <reaction evidence="1">
        <text>Endonucleolytic cleavage to 5'-phosphomonoester.</text>
        <dbReference type="EC" id="3.1.26.3"/>
    </reaction>
</comment>
<comment type="cofactor">
    <cofactor evidence="1">
        <name>Mg(2+)</name>
        <dbReference type="ChEBI" id="CHEBI:18420"/>
    </cofactor>
</comment>
<comment type="subunit">
    <text evidence="1">Homodimer.</text>
</comment>
<comment type="subcellular location">
    <subcellularLocation>
        <location evidence="1">Cytoplasm</location>
    </subcellularLocation>
</comment>
<comment type="similarity">
    <text evidence="1">Belongs to the ribonuclease III family.</text>
</comment>
<accession>Q92R47</accession>
<organism>
    <name type="scientific">Rhizobium meliloti (strain 1021)</name>
    <name type="common">Ensifer meliloti</name>
    <name type="synonym">Sinorhizobium meliloti</name>
    <dbReference type="NCBI Taxonomy" id="266834"/>
    <lineage>
        <taxon>Bacteria</taxon>
        <taxon>Pseudomonadati</taxon>
        <taxon>Pseudomonadota</taxon>
        <taxon>Alphaproteobacteria</taxon>
        <taxon>Hyphomicrobiales</taxon>
        <taxon>Rhizobiaceae</taxon>
        <taxon>Sinorhizobium/Ensifer group</taxon>
        <taxon>Sinorhizobium</taxon>
    </lineage>
</organism>
<feature type="chain" id="PRO_0000180423" description="Ribonuclease 3">
    <location>
        <begin position="1"/>
        <end position="238"/>
    </location>
</feature>
<feature type="domain" description="RNase III" evidence="1">
    <location>
        <begin position="11"/>
        <end position="136"/>
    </location>
</feature>
<feature type="domain" description="DRBM" evidence="1">
    <location>
        <begin position="161"/>
        <end position="230"/>
    </location>
</feature>
<feature type="active site" evidence="1">
    <location>
        <position position="53"/>
    </location>
</feature>
<feature type="active site" evidence="1">
    <location>
        <position position="125"/>
    </location>
</feature>
<feature type="binding site" evidence="1">
    <location>
        <position position="49"/>
    </location>
    <ligand>
        <name>Mg(2+)</name>
        <dbReference type="ChEBI" id="CHEBI:18420"/>
    </ligand>
</feature>
<feature type="binding site" evidence="1">
    <location>
        <position position="122"/>
    </location>
    <ligand>
        <name>Mg(2+)</name>
        <dbReference type="ChEBI" id="CHEBI:18420"/>
    </ligand>
</feature>
<feature type="binding site" evidence="1">
    <location>
        <position position="125"/>
    </location>
    <ligand>
        <name>Mg(2+)</name>
        <dbReference type="ChEBI" id="CHEBI:18420"/>
    </ligand>
</feature>
<proteinExistence type="inferred from homology"/>
<protein>
    <recommendedName>
        <fullName evidence="1">Ribonuclease 3</fullName>
        <ecNumber evidence="1">3.1.26.3</ecNumber>
    </recommendedName>
    <alternativeName>
        <fullName evidence="1">Ribonuclease III</fullName>
        <shortName evidence="1">RNase III</shortName>
    </alternativeName>
</protein>
<keyword id="KW-0963">Cytoplasm</keyword>
<keyword id="KW-0255">Endonuclease</keyword>
<keyword id="KW-0378">Hydrolase</keyword>
<keyword id="KW-0460">Magnesium</keyword>
<keyword id="KW-0479">Metal-binding</keyword>
<keyword id="KW-0507">mRNA processing</keyword>
<keyword id="KW-0540">Nuclease</keyword>
<keyword id="KW-1185">Reference proteome</keyword>
<keyword id="KW-0694">RNA-binding</keyword>
<keyword id="KW-0698">rRNA processing</keyword>
<keyword id="KW-0699">rRNA-binding</keyword>
<keyword id="KW-0819">tRNA processing</keyword>
<dbReference type="EC" id="3.1.26.3" evidence="1"/>
<dbReference type="EMBL" id="AL591688">
    <property type="protein sequence ID" value="CAC45651.1"/>
    <property type="molecule type" value="Genomic_DNA"/>
</dbReference>
<dbReference type="RefSeq" id="NP_385178.1">
    <property type="nucleotide sequence ID" value="NC_003047.1"/>
</dbReference>
<dbReference type="RefSeq" id="WP_010969021.1">
    <property type="nucleotide sequence ID" value="NC_003047.1"/>
</dbReference>
<dbReference type="SMR" id="Q92R47"/>
<dbReference type="EnsemblBacteria" id="CAC45651">
    <property type="protein sequence ID" value="CAC45651"/>
    <property type="gene ID" value="SMc02652"/>
</dbReference>
<dbReference type="KEGG" id="sme:SMc02652"/>
<dbReference type="PATRIC" id="fig|266834.11.peg.2478"/>
<dbReference type="eggNOG" id="COG0571">
    <property type="taxonomic scope" value="Bacteria"/>
</dbReference>
<dbReference type="HOGENOM" id="CLU_000907_1_1_5"/>
<dbReference type="OrthoDB" id="9805026at2"/>
<dbReference type="BRENDA" id="3.1.26.3">
    <property type="organism ID" value="5347"/>
</dbReference>
<dbReference type="Proteomes" id="UP000001976">
    <property type="component" value="Chromosome"/>
</dbReference>
<dbReference type="GO" id="GO:0005737">
    <property type="term" value="C:cytoplasm"/>
    <property type="evidence" value="ECO:0007669"/>
    <property type="project" value="UniProtKB-SubCell"/>
</dbReference>
<dbReference type="GO" id="GO:0003725">
    <property type="term" value="F:double-stranded RNA binding"/>
    <property type="evidence" value="ECO:0007669"/>
    <property type="project" value="TreeGrafter"/>
</dbReference>
<dbReference type="GO" id="GO:0046872">
    <property type="term" value="F:metal ion binding"/>
    <property type="evidence" value="ECO:0007669"/>
    <property type="project" value="UniProtKB-KW"/>
</dbReference>
<dbReference type="GO" id="GO:0004525">
    <property type="term" value="F:ribonuclease III activity"/>
    <property type="evidence" value="ECO:0007669"/>
    <property type="project" value="UniProtKB-UniRule"/>
</dbReference>
<dbReference type="GO" id="GO:0019843">
    <property type="term" value="F:rRNA binding"/>
    <property type="evidence" value="ECO:0007669"/>
    <property type="project" value="UniProtKB-KW"/>
</dbReference>
<dbReference type="GO" id="GO:0006397">
    <property type="term" value="P:mRNA processing"/>
    <property type="evidence" value="ECO:0007669"/>
    <property type="project" value="UniProtKB-UniRule"/>
</dbReference>
<dbReference type="GO" id="GO:0010468">
    <property type="term" value="P:regulation of gene expression"/>
    <property type="evidence" value="ECO:0007669"/>
    <property type="project" value="TreeGrafter"/>
</dbReference>
<dbReference type="GO" id="GO:0006364">
    <property type="term" value="P:rRNA processing"/>
    <property type="evidence" value="ECO:0007669"/>
    <property type="project" value="UniProtKB-UniRule"/>
</dbReference>
<dbReference type="GO" id="GO:0008033">
    <property type="term" value="P:tRNA processing"/>
    <property type="evidence" value="ECO:0007669"/>
    <property type="project" value="UniProtKB-KW"/>
</dbReference>
<dbReference type="CDD" id="cd10845">
    <property type="entry name" value="DSRM_RNAse_III_family"/>
    <property type="match status" value="1"/>
</dbReference>
<dbReference type="CDD" id="cd00593">
    <property type="entry name" value="RIBOc"/>
    <property type="match status" value="1"/>
</dbReference>
<dbReference type="FunFam" id="1.10.1520.10:FF:000001">
    <property type="entry name" value="Ribonuclease 3"/>
    <property type="match status" value="1"/>
</dbReference>
<dbReference type="Gene3D" id="3.30.160.20">
    <property type="match status" value="1"/>
</dbReference>
<dbReference type="Gene3D" id="1.10.1520.10">
    <property type="entry name" value="Ribonuclease III domain"/>
    <property type="match status" value="1"/>
</dbReference>
<dbReference type="HAMAP" id="MF_00104">
    <property type="entry name" value="RNase_III"/>
    <property type="match status" value="1"/>
</dbReference>
<dbReference type="InterPro" id="IPR014720">
    <property type="entry name" value="dsRBD_dom"/>
</dbReference>
<dbReference type="InterPro" id="IPR011907">
    <property type="entry name" value="RNase_III"/>
</dbReference>
<dbReference type="InterPro" id="IPR000999">
    <property type="entry name" value="RNase_III_dom"/>
</dbReference>
<dbReference type="InterPro" id="IPR036389">
    <property type="entry name" value="RNase_III_sf"/>
</dbReference>
<dbReference type="NCBIfam" id="TIGR02191">
    <property type="entry name" value="RNaseIII"/>
    <property type="match status" value="1"/>
</dbReference>
<dbReference type="PANTHER" id="PTHR11207:SF0">
    <property type="entry name" value="RIBONUCLEASE 3"/>
    <property type="match status" value="1"/>
</dbReference>
<dbReference type="PANTHER" id="PTHR11207">
    <property type="entry name" value="RIBONUCLEASE III"/>
    <property type="match status" value="1"/>
</dbReference>
<dbReference type="Pfam" id="PF00035">
    <property type="entry name" value="dsrm"/>
    <property type="match status" value="1"/>
</dbReference>
<dbReference type="Pfam" id="PF14622">
    <property type="entry name" value="Ribonucleas_3_3"/>
    <property type="match status" value="1"/>
</dbReference>
<dbReference type="SMART" id="SM00358">
    <property type="entry name" value="DSRM"/>
    <property type="match status" value="1"/>
</dbReference>
<dbReference type="SMART" id="SM00535">
    <property type="entry name" value="RIBOc"/>
    <property type="match status" value="1"/>
</dbReference>
<dbReference type="SUPFAM" id="SSF54768">
    <property type="entry name" value="dsRNA-binding domain-like"/>
    <property type="match status" value="1"/>
</dbReference>
<dbReference type="SUPFAM" id="SSF69065">
    <property type="entry name" value="RNase III domain-like"/>
    <property type="match status" value="1"/>
</dbReference>
<dbReference type="PROSITE" id="PS50137">
    <property type="entry name" value="DS_RBD"/>
    <property type="match status" value="1"/>
</dbReference>
<dbReference type="PROSITE" id="PS00517">
    <property type="entry name" value="RNASE_3_1"/>
    <property type="match status" value="1"/>
</dbReference>
<dbReference type="PROSITE" id="PS50142">
    <property type="entry name" value="RNASE_3_2"/>
    <property type="match status" value="1"/>
</dbReference>
<reference key="1">
    <citation type="journal article" date="2001" name="Proc. Natl. Acad. Sci. U.S.A.">
        <title>Analysis of the chromosome sequence of the legume symbiont Sinorhizobium meliloti strain 1021.</title>
        <authorList>
            <person name="Capela D."/>
            <person name="Barloy-Hubler F."/>
            <person name="Gouzy J."/>
            <person name="Bothe G."/>
            <person name="Ampe F."/>
            <person name="Batut J."/>
            <person name="Boistard P."/>
            <person name="Becker A."/>
            <person name="Boutry M."/>
            <person name="Cadieu E."/>
            <person name="Dreano S."/>
            <person name="Gloux S."/>
            <person name="Godrie T."/>
            <person name="Goffeau A."/>
            <person name="Kahn D."/>
            <person name="Kiss E."/>
            <person name="Lelaure V."/>
            <person name="Masuy D."/>
            <person name="Pohl T."/>
            <person name="Portetelle D."/>
            <person name="Puehler A."/>
            <person name="Purnelle B."/>
            <person name="Ramsperger U."/>
            <person name="Renard C."/>
            <person name="Thebault P."/>
            <person name="Vandenbol M."/>
            <person name="Weidner S."/>
            <person name="Galibert F."/>
        </authorList>
    </citation>
    <scope>NUCLEOTIDE SEQUENCE [LARGE SCALE GENOMIC DNA]</scope>
    <source>
        <strain>1021</strain>
    </source>
</reference>
<reference key="2">
    <citation type="journal article" date="2001" name="Science">
        <title>The composite genome of the legume symbiont Sinorhizobium meliloti.</title>
        <authorList>
            <person name="Galibert F."/>
            <person name="Finan T.M."/>
            <person name="Long S.R."/>
            <person name="Puehler A."/>
            <person name="Abola P."/>
            <person name="Ampe F."/>
            <person name="Barloy-Hubler F."/>
            <person name="Barnett M.J."/>
            <person name="Becker A."/>
            <person name="Boistard P."/>
            <person name="Bothe G."/>
            <person name="Boutry M."/>
            <person name="Bowser L."/>
            <person name="Buhrmester J."/>
            <person name="Cadieu E."/>
            <person name="Capela D."/>
            <person name="Chain P."/>
            <person name="Cowie A."/>
            <person name="Davis R.W."/>
            <person name="Dreano S."/>
            <person name="Federspiel N.A."/>
            <person name="Fisher R.F."/>
            <person name="Gloux S."/>
            <person name="Godrie T."/>
            <person name="Goffeau A."/>
            <person name="Golding B."/>
            <person name="Gouzy J."/>
            <person name="Gurjal M."/>
            <person name="Hernandez-Lucas I."/>
            <person name="Hong A."/>
            <person name="Huizar L."/>
            <person name="Hyman R.W."/>
            <person name="Jones T."/>
            <person name="Kahn D."/>
            <person name="Kahn M.L."/>
            <person name="Kalman S."/>
            <person name="Keating D.H."/>
            <person name="Kiss E."/>
            <person name="Komp C."/>
            <person name="Lelaure V."/>
            <person name="Masuy D."/>
            <person name="Palm C."/>
            <person name="Peck M.C."/>
            <person name="Pohl T.M."/>
            <person name="Portetelle D."/>
            <person name="Purnelle B."/>
            <person name="Ramsperger U."/>
            <person name="Surzycki R."/>
            <person name="Thebault P."/>
            <person name="Vandenbol M."/>
            <person name="Vorhoelter F.J."/>
            <person name="Weidner S."/>
            <person name="Wells D.H."/>
            <person name="Wong K."/>
            <person name="Yeh K.-C."/>
            <person name="Batut J."/>
        </authorList>
    </citation>
    <scope>NUCLEOTIDE SEQUENCE [LARGE SCALE GENOMIC DNA]</scope>
    <source>
        <strain>1021</strain>
    </source>
</reference>
<sequence length="238" mass="26480">MKGRSLNTEDRARLEAAIGYRFAEKERLDRALTHSSARSGRAINYQRLEFLGDRVLGLCVAELLFQTFTDANEGELSVRLNQLVSAESCAKVADELSLHEFIRTGSDVKKITGKHMMNVRADVVESLIAAIYLDGGLDAARRFVLEHWTHRAASADGARRDAKTELQEWAHAKFGVAPKYRTDDRSGPDHDPRFTVTVEVDGIAPETGVDRSKRGAEQVAAMKLLEREGVWQKRSAGN</sequence>